<name>CDPKX_ARATH</name>
<sequence>MGNCLAKKYGLVMKPQQNGERSVEIENRRRSTHQDPSKISTGTNQPPPWRNPAKHSGAAAILEKPYEDVKLFYTLSKELGRGQFGVTYLCTEKSTGKRFACKSISKKKLVTKGDKEDMRREIQIMQHLSGQPNIVEFKGAYEDEKAVNLVMELCAGGELFDRILAKGHYSERAAASVCRQIVNVVNICHFMGVMHRDLKPENFLLSSKDEKALIKATDFGLSVFIEEGRVYKDIVGSAYYVAPEVLKRRYGKEIDIWSAGIILYILLSGVPPFWAETEKGIFDAILEGEIDFESQPWPSISNSAKDLVRRMLTQDPKRRISAAEVLKHPWLREGGEASDKPIDSAVLSRMKQFRAMNKLKKLALKVIAENIDTEEIQGLKAMFANIDTDNSGTITYEELKEGLAKLGSRLTEAEVKQLMDAADVDGNGSIDYIEFITATMHRHRLESNENVYKAFQHFDKDGSGYITTDELEAALKEYGMGDDATIKEILSDVDADNDGRINYDEFCAMMRSGNPQQPRLF</sequence>
<dbReference type="EC" id="2.7.11.1" evidence="13"/>
<dbReference type="EMBL" id="AC079279">
    <property type="protein sequence ID" value="AAG51192.1"/>
    <property type="molecule type" value="Genomic_DNA"/>
</dbReference>
<dbReference type="EMBL" id="CP002684">
    <property type="protein sequence ID" value="AEE32581.1"/>
    <property type="molecule type" value="Genomic_DNA"/>
</dbReference>
<dbReference type="EMBL" id="BT012659">
    <property type="protein sequence ID" value="AAT06478.1"/>
    <property type="molecule type" value="mRNA"/>
</dbReference>
<dbReference type="EMBL" id="AK175623">
    <property type="protein sequence ID" value="BAD43386.1"/>
    <property type="molecule type" value="mRNA"/>
</dbReference>
<dbReference type="PIR" id="G96543">
    <property type="entry name" value="G96543"/>
</dbReference>
<dbReference type="RefSeq" id="NP_175485.1">
    <property type="nucleotide sequence ID" value="NM_103952.4"/>
</dbReference>
<dbReference type="SMR" id="Q9C6P3"/>
<dbReference type="BioGRID" id="26717">
    <property type="interactions" value="1"/>
</dbReference>
<dbReference type="FunCoup" id="Q9C6P3">
    <property type="interactions" value="1570"/>
</dbReference>
<dbReference type="STRING" id="3702.Q9C6P3"/>
<dbReference type="iPTMnet" id="Q9C6P3"/>
<dbReference type="PaxDb" id="3702-AT1G50700.1"/>
<dbReference type="ProteomicsDB" id="224452"/>
<dbReference type="EnsemblPlants" id="AT1G50700.1">
    <property type="protein sequence ID" value="AT1G50700.1"/>
    <property type="gene ID" value="AT1G50700"/>
</dbReference>
<dbReference type="GeneID" id="841492"/>
<dbReference type="Gramene" id="AT1G50700.1">
    <property type="protein sequence ID" value="AT1G50700.1"/>
    <property type="gene ID" value="AT1G50700"/>
</dbReference>
<dbReference type="KEGG" id="ath:AT1G50700"/>
<dbReference type="Araport" id="AT1G50700"/>
<dbReference type="TAIR" id="AT1G50700">
    <property type="gene designation" value="CPK33"/>
</dbReference>
<dbReference type="eggNOG" id="KOG0032">
    <property type="taxonomic scope" value="Eukaryota"/>
</dbReference>
<dbReference type="HOGENOM" id="CLU_000288_37_4_1"/>
<dbReference type="InParanoid" id="Q9C6P3"/>
<dbReference type="PhylomeDB" id="Q9C6P3"/>
<dbReference type="PRO" id="PR:Q9C6P3"/>
<dbReference type="Proteomes" id="UP000006548">
    <property type="component" value="Chromosome 1"/>
</dbReference>
<dbReference type="ExpressionAtlas" id="Q9C6P3">
    <property type="expression patterns" value="baseline and differential"/>
</dbReference>
<dbReference type="GO" id="GO:0005737">
    <property type="term" value="C:cytoplasm"/>
    <property type="evidence" value="ECO:0007669"/>
    <property type="project" value="UniProtKB-SubCell"/>
</dbReference>
<dbReference type="GO" id="GO:0005634">
    <property type="term" value="C:nucleus"/>
    <property type="evidence" value="ECO:0007669"/>
    <property type="project" value="UniProtKB-SubCell"/>
</dbReference>
<dbReference type="GO" id="GO:0005886">
    <property type="term" value="C:plasma membrane"/>
    <property type="evidence" value="ECO:0007005"/>
    <property type="project" value="TAIR"/>
</dbReference>
<dbReference type="GO" id="GO:0005524">
    <property type="term" value="F:ATP binding"/>
    <property type="evidence" value="ECO:0007669"/>
    <property type="project" value="UniProtKB-KW"/>
</dbReference>
<dbReference type="GO" id="GO:0005509">
    <property type="term" value="F:calcium ion binding"/>
    <property type="evidence" value="ECO:0007669"/>
    <property type="project" value="InterPro"/>
</dbReference>
<dbReference type="GO" id="GO:0106310">
    <property type="term" value="F:protein serine kinase activity"/>
    <property type="evidence" value="ECO:0007669"/>
    <property type="project" value="RHEA"/>
</dbReference>
<dbReference type="GO" id="GO:0004674">
    <property type="term" value="F:protein serine/threonine kinase activity"/>
    <property type="evidence" value="ECO:0007669"/>
    <property type="project" value="UniProtKB-KW"/>
</dbReference>
<dbReference type="CDD" id="cd05117">
    <property type="entry name" value="STKc_CAMK"/>
    <property type="match status" value="1"/>
</dbReference>
<dbReference type="FunFam" id="1.10.238.10:FF:000015">
    <property type="entry name" value="Calcium-dependent protein kinase 1"/>
    <property type="match status" value="1"/>
</dbReference>
<dbReference type="FunFam" id="3.30.200.20:FF:000004">
    <property type="entry name" value="Calcium-dependent protein kinase 1"/>
    <property type="match status" value="1"/>
</dbReference>
<dbReference type="FunFam" id="1.10.510.10:FF:000056">
    <property type="entry name" value="calcium-dependent protein kinase 1"/>
    <property type="match status" value="1"/>
</dbReference>
<dbReference type="Gene3D" id="1.10.238.10">
    <property type="entry name" value="EF-hand"/>
    <property type="match status" value="1"/>
</dbReference>
<dbReference type="Gene3D" id="3.30.200.20">
    <property type="entry name" value="Phosphorylase Kinase, domain 1"/>
    <property type="match status" value="1"/>
</dbReference>
<dbReference type="Gene3D" id="1.10.510.10">
    <property type="entry name" value="Transferase(Phosphotransferase) domain 1"/>
    <property type="match status" value="1"/>
</dbReference>
<dbReference type="InterPro" id="IPR050205">
    <property type="entry name" value="CDPK_Ser/Thr_kinases"/>
</dbReference>
<dbReference type="InterPro" id="IPR011992">
    <property type="entry name" value="EF-hand-dom_pair"/>
</dbReference>
<dbReference type="InterPro" id="IPR018247">
    <property type="entry name" value="EF_Hand_1_Ca_BS"/>
</dbReference>
<dbReference type="InterPro" id="IPR002048">
    <property type="entry name" value="EF_hand_dom"/>
</dbReference>
<dbReference type="InterPro" id="IPR011009">
    <property type="entry name" value="Kinase-like_dom_sf"/>
</dbReference>
<dbReference type="InterPro" id="IPR000719">
    <property type="entry name" value="Prot_kinase_dom"/>
</dbReference>
<dbReference type="InterPro" id="IPR017441">
    <property type="entry name" value="Protein_kinase_ATP_BS"/>
</dbReference>
<dbReference type="InterPro" id="IPR008271">
    <property type="entry name" value="Ser/Thr_kinase_AS"/>
</dbReference>
<dbReference type="PANTHER" id="PTHR24349">
    <property type="entry name" value="SERINE/THREONINE-PROTEIN KINASE"/>
    <property type="match status" value="1"/>
</dbReference>
<dbReference type="Pfam" id="PF13499">
    <property type="entry name" value="EF-hand_7"/>
    <property type="match status" value="2"/>
</dbReference>
<dbReference type="Pfam" id="PF00069">
    <property type="entry name" value="Pkinase"/>
    <property type="match status" value="1"/>
</dbReference>
<dbReference type="SMART" id="SM00054">
    <property type="entry name" value="EFh"/>
    <property type="match status" value="4"/>
</dbReference>
<dbReference type="SMART" id="SM00220">
    <property type="entry name" value="S_TKc"/>
    <property type="match status" value="1"/>
</dbReference>
<dbReference type="SUPFAM" id="SSF47473">
    <property type="entry name" value="EF-hand"/>
    <property type="match status" value="1"/>
</dbReference>
<dbReference type="SUPFAM" id="SSF56112">
    <property type="entry name" value="Protein kinase-like (PK-like)"/>
    <property type="match status" value="1"/>
</dbReference>
<dbReference type="PROSITE" id="PS00018">
    <property type="entry name" value="EF_HAND_1"/>
    <property type="match status" value="4"/>
</dbReference>
<dbReference type="PROSITE" id="PS50222">
    <property type="entry name" value="EF_HAND_2"/>
    <property type="match status" value="4"/>
</dbReference>
<dbReference type="PROSITE" id="PS00107">
    <property type="entry name" value="PROTEIN_KINASE_ATP"/>
    <property type="match status" value="1"/>
</dbReference>
<dbReference type="PROSITE" id="PS50011">
    <property type="entry name" value="PROTEIN_KINASE_DOM"/>
    <property type="match status" value="1"/>
</dbReference>
<dbReference type="PROSITE" id="PS00108">
    <property type="entry name" value="PROTEIN_KINASE_ST"/>
    <property type="match status" value="1"/>
</dbReference>
<keyword id="KW-0067">ATP-binding</keyword>
<keyword id="KW-0106">Calcium</keyword>
<keyword id="KW-1003">Cell membrane</keyword>
<keyword id="KW-0963">Cytoplasm</keyword>
<keyword id="KW-0418">Kinase</keyword>
<keyword id="KW-0449">Lipoprotein</keyword>
<keyword id="KW-0472">Membrane</keyword>
<keyword id="KW-0479">Metal-binding</keyword>
<keyword id="KW-0519">Myristate</keyword>
<keyword id="KW-0547">Nucleotide-binding</keyword>
<keyword id="KW-0539">Nucleus</keyword>
<keyword id="KW-0597">Phosphoprotein</keyword>
<keyword id="KW-1185">Reference proteome</keyword>
<keyword id="KW-0677">Repeat</keyword>
<keyword id="KW-0723">Serine/threonine-protein kinase</keyword>
<keyword id="KW-0808">Transferase</keyword>
<evidence type="ECO:0000250" key="1"/>
<evidence type="ECO:0000250" key="2">
    <source>
        <dbReference type="UniProtKB" id="Q9FKW4"/>
    </source>
</evidence>
<evidence type="ECO:0000255" key="3"/>
<evidence type="ECO:0000255" key="4">
    <source>
        <dbReference type="PROSITE-ProRule" id="PRU00159"/>
    </source>
</evidence>
<evidence type="ECO:0000255" key="5">
    <source>
        <dbReference type="PROSITE-ProRule" id="PRU00448"/>
    </source>
</evidence>
<evidence type="ECO:0000255" key="6">
    <source>
        <dbReference type="PROSITE-ProRule" id="PRU10027"/>
    </source>
</evidence>
<evidence type="ECO:0000256" key="7">
    <source>
        <dbReference type="SAM" id="MobiDB-lite"/>
    </source>
</evidence>
<evidence type="ECO:0000269" key="8">
    <source>
    </source>
</evidence>
<evidence type="ECO:0000269" key="9">
    <source>
    </source>
</evidence>
<evidence type="ECO:0000303" key="10">
    <source>
    </source>
</evidence>
<evidence type="ECO:0000303" key="11">
    <source>
    </source>
</evidence>
<evidence type="ECO:0000303" key="12">
    <source ref="5"/>
</evidence>
<evidence type="ECO:0000305" key="13"/>
<evidence type="ECO:0000305" key="14">
    <source>
    </source>
</evidence>
<evidence type="ECO:0000312" key="15">
    <source>
        <dbReference type="Araport" id="AT1G50700"/>
    </source>
</evidence>
<evidence type="ECO:0000312" key="16">
    <source>
        <dbReference type="EMBL" id="AAG51192.1"/>
    </source>
</evidence>
<protein>
    <recommendedName>
        <fullName evidence="10 11 12">Calcium-dependent protein kinase 33</fullName>
        <ecNumber evidence="13">2.7.11.1</ecNumber>
    </recommendedName>
</protein>
<gene>
    <name evidence="10 11 12" type="primary">CPK33</name>
    <name evidence="15" type="ordered locus">At1g50700</name>
    <name evidence="16" type="ORF">F17J6.22</name>
</gene>
<comment type="function">
    <text evidence="9 14">Ca(2+)-dependent protein kinase (PubMed:26662273). Negative regulator of stomatal closure and slow anion currents (PubMed:26662273). Unable to phosphorylate THI1 in vitro, but the kinase activity is essential for the stomatal closure regulation (PubMed:26662273). Phosphorylates FD (PubMed:25661797). May play a role in signal transduction pathways that involve calcium as a second messenger (Probable).</text>
</comment>
<comment type="catalytic activity">
    <reaction evidence="13">
        <text>L-seryl-[protein] + ATP = O-phospho-L-seryl-[protein] + ADP + H(+)</text>
        <dbReference type="Rhea" id="RHEA:17989"/>
        <dbReference type="Rhea" id="RHEA-COMP:9863"/>
        <dbReference type="Rhea" id="RHEA-COMP:11604"/>
        <dbReference type="ChEBI" id="CHEBI:15378"/>
        <dbReference type="ChEBI" id="CHEBI:29999"/>
        <dbReference type="ChEBI" id="CHEBI:30616"/>
        <dbReference type="ChEBI" id="CHEBI:83421"/>
        <dbReference type="ChEBI" id="CHEBI:456216"/>
        <dbReference type="EC" id="2.7.11.1"/>
    </reaction>
</comment>
<comment type="catalytic activity">
    <reaction evidence="13">
        <text>L-threonyl-[protein] + ATP = O-phospho-L-threonyl-[protein] + ADP + H(+)</text>
        <dbReference type="Rhea" id="RHEA:46608"/>
        <dbReference type="Rhea" id="RHEA-COMP:11060"/>
        <dbReference type="Rhea" id="RHEA-COMP:11605"/>
        <dbReference type="ChEBI" id="CHEBI:15378"/>
        <dbReference type="ChEBI" id="CHEBI:30013"/>
        <dbReference type="ChEBI" id="CHEBI:30616"/>
        <dbReference type="ChEBI" id="CHEBI:61977"/>
        <dbReference type="ChEBI" id="CHEBI:456216"/>
        <dbReference type="EC" id="2.7.11.1"/>
    </reaction>
</comment>
<comment type="activity regulation">
    <text evidence="1 9">Activated by calcium. Autophosphorylation may play an important role in the regulation of the kinase activity (By similarity). Repressed by THI1 through a negative regulation of the autophosphorylation activity in the presence of Ca(2+) (PubMed:26662273).</text>
</comment>
<comment type="subunit">
    <text evidence="8 9">Interacts with THI1 (PubMed:26662273). Interacts with FD and FDP (PubMed:25661797).</text>
</comment>
<comment type="subcellular location">
    <subcellularLocation>
        <location evidence="9">Cell membrane</location>
        <topology evidence="13">Lipid-anchor</topology>
    </subcellularLocation>
    <subcellularLocation>
        <location evidence="8">Nucleus</location>
    </subcellularLocation>
    <subcellularLocation>
        <location evidence="8">Cytoplasm</location>
    </subcellularLocation>
</comment>
<comment type="tissue specificity">
    <text evidence="8 9">Expressed in primary roots, leaves, inflorescences, siliques and guard cells (PubMed:26662273). Expressed in the shoot apical meristem (PubMed:25661797).</text>
</comment>
<comment type="induction">
    <text evidence="9">Up-regulated by abscisic acid treatment and drought stress, but not by thiamine.</text>
</comment>
<comment type="domain">
    <text evidence="1">There are 3 contiguous domains conserved in the CDPK subfamily: a kinase domain, an autoinhibitory (junction) domain and a calmodulin-like domain. The autoinhibitory domain (337-367) inactivates kinase activity under calcium-free conditions (By similarity).</text>
</comment>
<comment type="PTM">
    <text evidence="9">Autophosphorylated.</text>
</comment>
<comment type="disruption phenotype">
    <text evidence="8 9">Increased sensitivity to abscisic acid stomatal closure (PubMed:26662273). Delayed floral transition (PubMed:25661797).</text>
</comment>
<comment type="similarity">
    <text evidence="4">Belongs to the protein kinase superfamily. Ser/Thr protein kinase family. CDPK subfamily.</text>
</comment>
<feature type="initiator methionine" description="Removed" evidence="3">
    <location>
        <position position="1"/>
    </location>
</feature>
<feature type="chain" id="PRO_0000363354" description="Calcium-dependent protein kinase 33">
    <location>
        <begin position="2"/>
        <end position="521"/>
    </location>
</feature>
<feature type="domain" description="Protein kinase" evidence="4">
    <location>
        <begin position="73"/>
        <end position="331"/>
    </location>
</feature>
<feature type="domain" description="EF-hand 1" evidence="5">
    <location>
        <begin position="374"/>
        <end position="409"/>
    </location>
</feature>
<feature type="domain" description="EF-hand 2" evidence="5">
    <location>
        <begin position="410"/>
        <end position="445"/>
    </location>
</feature>
<feature type="domain" description="EF-hand 3" evidence="5">
    <location>
        <begin position="446"/>
        <end position="481"/>
    </location>
</feature>
<feature type="domain" description="EF-hand 4" evidence="5">
    <location>
        <begin position="482"/>
        <end position="516"/>
    </location>
</feature>
<feature type="region of interest" description="Disordered" evidence="7">
    <location>
        <begin position="15"/>
        <end position="56"/>
    </location>
</feature>
<feature type="region of interest" description="Autoinhibitory domain" evidence="1">
    <location>
        <begin position="337"/>
        <end position="367"/>
    </location>
</feature>
<feature type="compositionally biased region" description="Basic and acidic residues" evidence="7">
    <location>
        <begin position="21"/>
        <end position="36"/>
    </location>
</feature>
<feature type="active site" description="Proton acceptor" evidence="4 6">
    <location>
        <position position="197"/>
    </location>
</feature>
<feature type="binding site" evidence="4">
    <location>
        <begin position="79"/>
        <end position="87"/>
    </location>
    <ligand>
        <name>ATP</name>
        <dbReference type="ChEBI" id="CHEBI:30616"/>
    </ligand>
</feature>
<feature type="binding site" evidence="4">
    <location>
        <position position="102"/>
    </location>
    <ligand>
        <name>ATP</name>
        <dbReference type="ChEBI" id="CHEBI:30616"/>
    </ligand>
</feature>
<feature type="binding site" evidence="5">
    <location>
        <position position="387"/>
    </location>
    <ligand>
        <name>Ca(2+)</name>
        <dbReference type="ChEBI" id="CHEBI:29108"/>
        <label>1</label>
    </ligand>
</feature>
<feature type="binding site" evidence="5">
    <location>
        <position position="389"/>
    </location>
    <ligand>
        <name>Ca(2+)</name>
        <dbReference type="ChEBI" id="CHEBI:29108"/>
        <label>1</label>
    </ligand>
</feature>
<feature type="binding site" evidence="5">
    <location>
        <position position="391"/>
    </location>
    <ligand>
        <name>Ca(2+)</name>
        <dbReference type="ChEBI" id="CHEBI:29108"/>
        <label>1</label>
    </ligand>
</feature>
<feature type="binding site" evidence="5">
    <location>
        <position position="393"/>
    </location>
    <ligand>
        <name>Ca(2+)</name>
        <dbReference type="ChEBI" id="CHEBI:29108"/>
        <label>1</label>
    </ligand>
</feature>
<feature type="binding site" evidence="5">
    <location>
        <position position="398"/>
    </location>
    <ligand>
        <name>Ca(2+)</name>
        <dbReference type="ChEBI" id="CHEBI:29108"/>
        <label>1</label>
    </ligand>
</feature>
<feature type="binding site" evidence="5">
    <location>
        <position position="423"/>
    </location>
    <ligand>
        <name>Ca(2+)</name>
        <dbReference type="ChEBI" id="CHEBI:29108"/>
        <label>2</label>
    </ligand>
</feature>
<feature type="binding site" evidence="5">
    <location>
        <position position="425"/>
    </location>
    <ligand>
        <name>Ca(2+)</name>
        <dbReference type="ChEBI" id="CHEBI:29108"/>
        <label>2</label>
    </ligand>
</feature>
<feature type="binding site" evidence="5">
    <location>
        <position position="427"/>
    </location>
    <ligand>
        <name>Ca(2+)</name>
        <dbReference type="ChEBI" id="CHEBI:29108"/>
        <label>2</label>
    </ligand>
</feature>
<feature type="binding site" evidence="5">
    <location>
        <position position="429"/>
    </location>
    <ligand>
        <name>Ca(2+)</name>
        <dbReference type="ChEBI" id="CHEBI:29108"/>
        <label>2</label>
    </ligand>
</feature>
<feature type="binding site" evidence="5">
    <location>
        <position position="434"/>
    </location>
    <ligand>
        <name>Ca(2+)</name>
        <dbReference type="ChEBI" id="CHEBI:29108"/>
        <label>2</label>
    </ligand>
</feature>
<feature type="binding site" evidence="5">
    <location>
        <position position="459"/>
    </location>
    <ligand>
        <name>Ca(2+)</name>
        <dbReference type="ChEBI" id="CHEBI:29108"/>
        <label>3</label>
    </ligand>
</feature>
<feature type="binding site" evidence="5">
    <location>
        <position position="461"/>
    </location>
    <ligand>
        <name>Ca(2+)</name>
        <dbReference type="ChEBI" id="CHEBI:29108"/>
        <label>3</label>
    </ligand>
</feature>
<feature type="binding site" evidence="5">
    <location>
        <position position="463"/>
    </location>
    <ligand>
        <name>Ca(2+)</name>
        <dbReference type="ChEBI" id="CHEBI:29108"/>
        <label>3</label>
    </ligand>
</feature>
<feature type="binding site" evidence="5">
    <location>
        <position position="465"/>
    </location>
    <ligand>
        <name>Ca(2+)</name>
        <dbReference type="ChEBI" id="CHEBI:29108"/>
        <label>3</label>
    </ligand>
</feature>
<feature type="binding site" evidence="5">
    <location>
        <position position="470"/>
    </location>
    <ligand>
        <name>Ca(2+)</name>
        <dbReference type="ChEBI" id="CHEBI:29108"/>
        <label>3</label>
    </ligand>
</feature>
<feature type="binding site" evidence="5">
    <location>
        <position position="494"/>
    </location>
    <ligand>
        <name>Ca(2+)</name>
        <dbReference type="ChEBI" id="CHEBI:29108"/>
        <label>4</label>
    </ligand>
</feature>
<feature type="binding site" evidence="5">
    <location>
        <position position="496"/>
    </location>
    <ligand>
        <name>Ca(2+)</name>
        <dbReference type="ChEBI" id="CHEBI:29108"/>
        <label>4</label>
    </ligand>
</feature>
<feature type="binding site" evidence="5">
    <location>
        <position position="498"/>
    </location>
    <ligand>
        <name>Ca(2+)</name>
        <dbReference type="ChEBI" id="CHEBI:29108"/>
        <label>4</label>
    </ligand>
</feature>
<feature type="binding site" evidence="5">
    <location>
        <position position="500"/>
    </location>
    <ligand>
        <name>Ca(2+)</name>
        <dbReference type="ChEBI" id="CHEBI:29108"/>
        <label>4</label>
    </ligand>
</feature>
<feature type="binding site" evidence="5">
    <location>
        <position position="505"/>
    </location>
    <ligand>
        <name>Ca(2+)</name>
        <dbReference type="ChEBI" id="CHEBI:29108"/>
        <label>4</label>
    </ligand>
</feature>
<feature type="modified residue" description="Phosphoserine" evidence="2">
    <location>
        <position position="237"/>
    </location>
</feature>
<feature type="lipid moiety-binding region" description="N-myristoyl glycine" evidence="3">
    <location>
        <position position="2"/>
    </location>
</feature>
<feature type="mutagenesis site" description="Loss of membrane association." evidence="9">
    <original>G</original>
    <variation>A</variation>
    <location>
        <position position="2"/>
    </location>
</feature>
<feature type="mutagenesis site" description="Loss of kinase activity." evidence="9">
    <original>K</original>
    <variation>R</variation>
    <location>
        <position position="102"/>
    </location>
</feature>
<proteinExistence type="evidence at protein level"/>
<reference key="1">
    <citation type="journal article" date="2000" name="Nature">
        <title>Sequence and analysis of chromosome 1 of the plant Arabidopsis thaliana.</title>
        <authorList>
            <person name="Theologis A."/>
            <person name="Ecker J.R."/>
            <person name="Palm C.J."/>
            <person name="Federspiel N.A."/>
            <person name="Kaul S."/>
            <person name="White O."/>
            <person name="Alonso J."/>
            <person name="Altafi H."/>
            <person name="Araujo R."/>
            <person name="Bowman C.L."/>
            <person name="Brooks S.Y."/>
            <person name="Buehler E."/>
            <person name="Chan A."/>
            <person name="Chao Q."/>
            <person name="Chen H."/>
            <person name="Cheuk R.F."/>
            <person name="Chin C.W."/>
            <person name="Chung M.K."/>
            <person name="Conn L."/>
            <person name="Conway A.B."/>
            <person name="Conway A.R."/>
            <person name="Creasy T.H."/>
            <person name="Dewar K."/>
            <person name="Dunn P."/>
            <person name="Etgu P."/>
            <person name="Feldblyum T.V."/>
            <person name="Feng J.-D."/>
            <person name="Fong B."/>
            <person name="Fujii C.Y."/>
            <person name="Gill J.E."/>
            <person name="Goldsmith A.D."/>
            <person name="Haas B."/>
            <person name="Hansen N.F."/>
            <person name="Hughes B."/>
            <person name="Huizar L."/>
            <person name="Hunter J.L."/>
            <person name="Jenkins J."/>
            <person name="Johnson-Hopson C."/>
            <person name="Khan S."/>
            <person name="Khaykin E."/>
            <person name="Kim C.J."/>
            <person name="Koo H.L."/>
            <person name="Kremenetskaia I."/>
            <person name="Kurtz D.B."/>
            <person name="Kwan A."/>
            <person name="Lam B."/>
            <person name="Langin-Hooper S."/>
            <person name="Lee A."/>
            <person name="Lee J.M."/>
            <person name="Lenz C.A."/>
            <person name="Li J.H."/>
            <person name="Li Y.-P."/>
            <person name="Lin X."/>
            <person name="Liu S.X."/>
            <person name="Liu Z.A."/>
            <person name="Luros J.S."/>
            <person name="Maiti R."/>
            <person name="Marziali A."/>
            <person name="Militscher J."/>
            <person name="Miranda M."/>
            <person name="Nguyen M."/>
            <person name="Nierman W.C."/>
            <person name="Osborne B.I."/>
            <person name="Pai G."/>
            <person name="Peterson J."/>
            <person name="Pham P.K."/>
            <person name="Rizzo M."/>
            <person name="Rooney T."/>
            <person name="Rowley D."/>
            <person name="Sakano H."/>
            <person name="Salzberg S.L."/>
            <person name="Schwartz J.R."/>
            <person name="Shinn P."/>
            <person name="Southwick A.M."/>
            <person name="Sun H."/>
            <person name="Tallon L.J."/>
            <person name="Tambunga G."/>
            <person name="Toriumi M.J."/>
            <person name="Town C.D."/>
            <person name="Utterback T."/>
            <person name="Van Aken S."/>
            <person name="Vaysberg M."/>
            <person name="Vysotskaia V.S."/>
            <person name="Walker M."/>
            <person name="Wu D."/>
            <person name="Yu G."/>
            <person name="Fraser C.M."/>
            <person name="Venter J.C."/>
            <person name="Davis R.W."/>
        </authorList>
    </citation>
    <scope>NUCLEOTIDE SEQUENCE [LARGE SCALE GENOMIC DNA]</scope>
    <source>
        <strain>cv. Columbia</strain>
    </source>
</reference>
<reference key="2">
    <citation type="journal article" date="2017" name="Plant J.">
        <title>Araport11: a complete reannotation of the Arabidopsis thaliana reference genome.</title>
        <authorList>
            <person name="Cheng C.Y."/>
            <person name="Krishnakumar V."/>
            <person name="Chan A.P."/>
            <person name="Thibaud-Nissen F."/>
            <person name="Schobel S."/>
            <person name="Town C.D."/>
        </authorList>
    </citation>
    <scope>GENOME REANNOTATION</scope>
    <source>
        <strain>cv. Columbia</strain>
    </source>
</reference>
<reference key="3">
    <citation type="submission" date="2004-05" db="EMBL/GenBank/DDBJ databases">
        <title>Arabidopsis ORF clones.</title>
        <authorList>
            <person name="Cheuk R.F."/>
            <person name="Chen H."/>
            <person name="Kim C.J."/>
            <person name="Shinn P."/>
            <person name="Carninci P."/>
            <person name="Hayashizaki Y."/>
            <person name="Ishida J."/>
            <person name="Kamiya A."/>
            <person name="Kawai J."/>
            <person name="Narusaka M."/>
            <person name="Sakurai T."/>
            <person name="Satou M."/>
            <person name="Seki M."/>
            <person name="Shinozaki K."/>
            <person name="Ecker J.R."/>
        </authorList>
    </citation>
    <scope>NUCLEOTIDE SEQUENCE [LARGE SCALE MRNA]</scope>
    <source>
        <strain>cv. Columbia</strain>
    </source>
</reference>
<reference key="4">
    <citation type="submission" date="2004-09" db="EMBL/GenBank/DDBJ databases">
        <title>Large-scale analysis of RIKEN Arabidopsis full-length (RAFL) cDNAs.</title>
        <authorList>
            <person name="Totoki Y."/>
            <person name="Seki M."/>
            <person name="Ishida J."/>
            <person name="Nakajima M."/>
            <person name="Enju A."/>
            <person name="Kamiya A."/>
            <person name="Narusaka M."/>
            <person name="Shin-i T."/>
            <person name="Nakagawa M."/>
            <person name="Sakamoto N."/>
            <person name="Oishi K."/>
            <person name="Kohara Y."/>
            <person name="Kobayashi M."/>
            <person name="Toyoda A."/>
            <person name="Sakaki Y."/>
            <person name="Sakurai T."/>
            <person name="Iida K."/>
            <person name="Akiyama K."/>
            <person name="Satou M."/>
            <person name="Toyoda T."/>
            <person name="Konagaya A."/>
            <person name="Carninci P."/>
            <person name="Kawai J."/>
            <person name="Hayashizaki Y."/>
            <person name="Shinozaki K."/>
        </authorList>
    </citation>
    <scope>NUCLEOTIDE SEQUENCE [LARGE SCALE MRNA]</scope>
    <source>
        <strain>cv. Columbia</strain>
    </source>
</reference>
<reference key="5">
    <citation type="journal article" date="2001" name="New Phytol.">
        <title>The CDPK superfamily of protein kinases.</title>
        <authorList>
            <person name="Harmon A.C."/>
            <person name="Gribskov M."/>
            <person name="Gubrium E."/>
            <person name="Harper J.F."/>
        </authorList>
    </citation>
    <scope>GENE FAMILY</scope>
    <scope>NOMENCLATURE</scope>
</reference>
<reference key="6">
    <citation type="journal article" date="2002" name="Plant Physiol.">
        <title>Calcium signaling through protein kinases. The Arabidopsis calcium-dependent protein kinase gene family.</title>
        <authorList>
            <person name="Cheng S.-H."/>
            <person name="Willmann M.R."/>
            <person name="Chen H.-C."/>
            <person name="Sheen J."/>
        </authorList>
    </citation>
    <scope>GENE FAMILY</scope>
    <scope>NOMENCLATURE</scope>
</reference>
<reference key="7">
    <citation type="journal article" date="2003" name="Plant Physiol.">
        <title>The Arabidopsis CDPK-SnRK superfamily of protein kinases.</title>
        <authorList>
            <person name="Hrabak E.M."/>
            <person name="Chan C.W.M."/>
            <person name="Gribskov M."/>
            <person name="Harper J.F."/>
            <person name="Choi J.H."/>
            <person name="Halford N."/>
            <person name="Kudla J."/>
            <person name="Luan S."/>
            <person name="Nimmo H.G."/>
            <person name="Sussman M.R."/>
            <person name="Thomas M."/>
            <person name="Walker-Simmons K."/>
            <person name="Zhu J.-K."/>
            <person name="Harmon A.C."/>
        </authorList>
    </citation>
    <scope>GENE FAMILY</scope>
    <scope>NOMENCLATURE</scope>
</reference>
<reference key="8">
    <citation type="journal article" date="2015" name="Sci. Rep.">
        <title>Calcium-dependent protein kinases responsible for the phosphorylation of a bZIP transcription factor FD crucial for the florigen complex formation.</title>
        <authorList>
            <person name="Kawamoto N."/>
            <person name="Sasabe M."/>
            <person name="Endo M."/>
            <person name="Machida Y."/>
            <person name="Araki T."/>
        </authorList>
    </citation>
    <scope>FUNCTION</scope>
    <scope>SUBCELLULAR LOCATION</scope>
    <scope>INTERACTION WITH FD AND FDP</scope>
    <scope>TISSUE SPECIFICITY</scope>
    <scope>DISRUPTION PHENOTYPE</scope>
</reference>
<reference key="9">
    <citation type="journal article" date="2016" name="Plant Physiol.">
        <title>THI1, a thiamine thiazole synthase, interacts with Ca2+-dependent protein kinase CPK33 and modulates the S-type anion channels and stomatal closure in Arabidopsis.</title>
        <authorList>
            <person name="Li C.L."/>
            <person name="Wang M."/>
            <person name="Wu X.M."/>
            <person name="Chen D.H."/>
            <person name="Lv H.J."/>
            <person name="Shen J.L."/>
            <person name="Qiao Z."/>
            <person name="Zhang W."/>
        </authorList>
    </citation>
    <scope>FUNCTION</scope>
    <scope>INTERACTION WITH THI1</scope>
    <scope>TISSUE SPECIFICITY</scope>
    <scope>INDUCTION BY ABSCISIC ACID AND DROUGHT</scope>
    <scope>SUBCELLULAR LOCATION</scope>
    <scope>MUTAGENESIS OF GLY-2 AND LYS-102</scope>
    <scope>DISRUPTION PHENOTYPE</scope>
    <scope>AUTOPHOSPHORYLATION</scope>
    <scope>ACTIVITY REGULATION</scope>
</reference>
<organism>
    <name type="scientific">Arabidopsis thaliana</name>
    <name type="common">Mouse-ear cress</name>
    <dbReference type="NCBI Taxonomy" id="3702"/>
    <lineage>
        <taxon>Eukaryota</taxon>
        <taxon>Viridiplantae</taxon>
        <taxon>Streptophyta</taxon>
        <taxon>Embryophyta</taxon>
        <taxon>Tracheophyta</taxon>
        <taxon>Spermatophyta</taxon>
        <taxon>Magnoliopsida</taxon>
        <taxon>eudicotyledons</taxon>
        <taxon>Gunneridae</taxon>
        <taxon>Pentapetalae</taxon>
        <taxon>rosids</taxon>
        <taxon>malvids</taxon>
        <taxon>Brassicales</taxon>
        <taxon>Brassicaceae</taxon>
        <taxon>Camelineae</taxon>
        <taxon>Arabidopsis</taxon>
    </lineage>
</organism>
<accession>Q9C6P3</accession>